<proteinExistence type="inferred from homology"/>
<name>PSBI_PROM3</name>
<feature type="chain" id="PRO_0000298296" description="Photosystem II reaction center protein I">
    <location>
        <begin position="1"/>
        <end position="39"/>
    </location>
</feature>
<feature type="transmembrane region" description="Helical" evidence="1">
    <location>
        <begin position="6"/>
        <end position="26"/>
    </location>
</feature>
<accession>A2CCI6</accession>
<reference key="1">
    <citation type="journal article" date="2007" name="PLoS Genet.">
        <title>Patterns and implications of gene gain and loss in the evolution of Prochlorococcus.</title>
        <authorList>
            <person name="Kettler G.C."/>
            <person name="Martiny A.C."/>
            <person name="Huang K."/>
            <person name="Zucker J."/>
            <person name="Coleman M.L."/>
            <person name="Rodrigue S."/>
            <person name="Chen F."/>
            <person name="Lapidus A."/>
            <person name="Ferriera S."/>
            <person name="Johnson J."/>
            <person name="Steglich C."/>
            <person name="Church G.M."/>
            <person name="Richardson P."/>
            <person name="Chisholm S.W."/>
        </authorList>
    </citation>
    <scope>NUCLEOTIDE SEQUENCE [LARGE SCALE GENOMIC DNA]</scope>
    <source>
        <strain>MIT 9303</strain>
    </source>
</reference>
<evidence type="ECO:0000255" key="1">
    <source>
        <dbReference type="HAMAP-Rule" id="MF_01316"/>
    </source>
</evidence>
<evidence type="ECO:0000305" key="2"/>
<keyword id="KW-0472">Membrane</keyword>
<keyword id="KW-0602">Photosynthesis</keyword>
<keyword id="KW-0604">Photosystem II</keyword>
<keyword id="KW-0674">Reaction center</keyword>
<keyword id="KW-0793">Thylakoid</keyword>
<keyword id="KW-0812">Transmembrane</keyword>
<keyword id="KW-1133">Transmembrane helix</keyword>
<organism>
    <name type="scientific">Prochlorococcus marinus (strain MIT 9303)</name>
    <dbReference type="NCBI Taxonomy" id="59922"/>
    <lineage>
        <taxon>Bacteria</taxon>
        <taxon>Bacillati</taxon>
        <taxon>Cyanobacteriota</taxon>
        <taxon>Cyanophyceae</taxon>
        <taxon>Synechococcales</taxon>
        <taxon>Prochlorococcaceae</taxon>
        <taxon>Prochlorococcus</taxon>
    </lineage>
</organism>
<protein>
    <recommendedName>
        <fullName evidence="1">Photosystem II reaction center protein I</fullName>
        <shortName evidence="1">PSII-I</shortName>
    </recommendedName>
    <alternativeName>
        <fullName evidence="1">PSII 4.4 kDa protein</fullName>
    </alternativeName>
</protein>
<comment type="function">
    <text evidence="1">One of the components of the core complex of photosystem II (PSII), required for its stability and/or assembly. PSII is a light-driven water:plastoquinone oxidoreductase that uses light energy to abstract electrons from H(2)O, generating O(2) and a proton gradient subsequently used for ATP formation. It consists of a core antenna complex that captures photons, and an electron transfer chain that converts photonic excitation into a charge separation.</text>
</comment>
<comment type="subunit">
    <text evidence="2">PSII is composed of 1 copy each of membrane proteins PsbA, PsbB, PsbC, PsbD, PsbE, PsbF, PsbH, PsbI, PsbJ, PsbK, PsbL, PsbM, PsbT, PsbX, PsbY, Psb30/Ycf12, peripheral proteins PsbO, CyanoQ (PsbQ), PsbU, PsbV and a large number of cofactors. It forms dimeric complexes.</text>
</comment>
<comment type="subcellular location">
    <subcellularLocation>
        <location evidence="1">Cellular thylakoid membrane</location>
        <topology evidence="1">Single-pass membrane protein</topology>
    </subcellularLocation>
</comment>
<comment type="similarity">
    <text evidence="1">Belongs to the PsbI family.</text>
</comment>
<gene>
    <name evidence="1" type="primary">psbI</name>
    <name type="ordered locus">P9303_24651</name>
</gene>
<dbReference type="EMBL" id="CP000554">
    <property type="protein sequence ID" value="ABM79196.1"/>
    <property type="molecule type" value="Genomic_DNA"/>
</dbReference>
<dbReference type="RefSeq" id="WP_011827047.1">
    <property type="nucleotide sequence ID" value="NC_008820.1"/>
</dbReference>
<dbReference type="SMR" id="A2CCI6"/>
<dbReference type="STRING" id="59922.P9303_24651"/>
<dbReference type="KEGG" id="pmf:P9303_24651"/>
<dbReference type="HOGENOM" id="CLU_212150_0_0_3"/>
<dbReference type="BioCyc" id="PMAR59922:G1G80-2156-MONOMER"/>
<dbReference type="Proteomes" id="UP000002274">
    <property type="component" value="Chromosome"/>
</dbReference>
<dbReference type="GO" id="GO:0009539">
    <property type="term" value="C:photosystem II reaction center"/>
    <property type="evidence" value="ECO:0007669"/>
    <property type="project" value="InterPro"/>
</dbReference>
<dbReference type="GO" id="GO:0031676">
    <property type="term" value="C:plasma membrane-derived thylakoid membrane"/>
    <property type="evidence" value="ECO:0007669"/>
    <property type="project" value="UniProtKB-SubCell"/>
</dbReference>
<dbReference type="GO" id="GO:0015979">
    <property type="term" value="P:photosynthesis"/>
    <property type="evidence" value="ECO:0007669"/>
    <property type="project" value="UniProtKB-UniRule"/>
</dbReference>
<dbReference type="HAMAP" id="MF_01316">
    <property type="entry name" value="PSII_PsbI"/>
    <property type="match status" value="1"/>
</dbReference>
<dbReference type="InterPro" id="IPR003686">
    <property type="entry name" value="PSII_PsbI"/>
</dbReference>
<dbReference type="InterPro" id="IPR037271">
    <property type="entry name" value="PSII_PsbI_sf"/>
</dbReference>
<dbReference type="NCBIfam" id="NF002735">
    <property type="entry name" value="PRK02655.1"/>
    <property type="match status" value="1"/>
</dbReference>
<dbReference type="PANTHER" id="PTHR35772">
    <property type="entry name" value="PHOTOSYSTEM II REACTION CENTER PROTEIN I"/>
    <property type="match status" value="1"/>
</dbReference>
<dbReference type="PANTHER" id="PTHR35772:SF1">
    <property type="entry name" value="PHOTOSYSTEM II REACTION CENTER PROTEIN I"/>
    <property type="match status" value="1"/>
</dbReference>
<dbReference type="Pfam" id="PF02532">
    <property type="entry name" value="PsbI"/>
    <property type="match status" value="1"/>
</dbReference>
<dbReference type="SUPFAM" id="SSF161041">
    <property type="entry name" value="Photosystem II reaction center protein I, PsbI"/>
    <property type="match status" value="1"/>
</dbReference>
<sequence length="39" mass="4382">MLALKLSVYSVVFFFIAVFVFGFLASDPARTPARKDLED</sequence>